<evidence type="ECO:0000250" key="1">
    <source>
        <dbReference type="UniProtKB" id="Q99SZ7"/>
    </source>
</evidence>
<evidence type="ECO:0000250" key="2">
    <source>
        <dbReference type="UniProtKB" id="Q9HWA7"/>
    </source>
</evidence>
<evidence type="ECO:0000255" key="3"/>
<evidence type="ECO:0000305" key="4"/>
<gene>
    <name type="primary">vraS</name>
    <name type="ordered locus">SAR1975</name>
</gene>
<keyword id="KW-0067">ATP-binding</keyword>
<keyword id="KW-1003">Cell membrane</keyword>
<keyword id="KW-0418">Kinase</keyword>
<keyword id="KW-0472">Membrane</keyword>
<keyword id="KW-0547">Nucleotide-binding</keyword>
<keyword id="KW-0597">Phosphoprotein</keyword>
<keyword id="KW-0808">Transferase</keyword>
<keyword id="KW-0812">Transmembrane</keyword>
<keyword id="KW-1133">Transmembrane helix</keyword>
<keyword id="KW-0902">Two-component regulatory system</keyword>
<organism>
    <name type="scientific">Staphylococcus aureus (strain MRSA252)</name>
    <dbReference type="NCBI Taxonomy" id="282458"/>
    <lineage>
        <taxon>Bacteria</taxon>
        <taxon>Bacillati</taxon>
        <taxon>Bacillota</taxon>
        <taxon>Bacilli</taxon>
        <taxon>Bacillales</taxon>
        <taxon>Staphylococcaceae</taxon>
        <taxon>Staphylococcus</taxon>
    </lineage>
</organism>
<reference key="1">
    <citation type="journal article" date="2004" name="Proc. Natl. Acad. Sci. U.S.A.">
        <title>Complete genomes of two clinical Staphylococcus aureus strains: evidence for the rapid evolution of virulence and drug resistance.</title>
        <authorList>
            <person name="Holden M.T.G."/>
            <person name="Feil E.J."/>
            <person name="Lindsay J.A."/>
            <person name="Peacock S.J."/>
            <person name="Day N.P.J."/>
            <person name="Enright M.C."/>
            <person name="Foster T.J."/>
            <person name="Moore C.E."/>
            <person name="Hurst L."/>
            <person name="Atkin R."/>
            <person name="Barron A."/>
            <person name="Bason N."/>
            <person name="Bentley S.D."/>
            <person name="Chillingworth C."/>
            <person name="Chillingworth T."/>
            <person name="Churcher C."/>
            <person name="Clark L."/>
            <person name="Corton C."/>
            <person name="Cronin A."/>
            <person name="Doggett J."/>
            <person name="Dowd L."/>
            <person name="Feltwell T."/>
            <person name="Hance Z."/>
            <person name="Harris B."/>
            <person name="Hauser H."/>
            <person name="Holroyd S."/>
            <person name="Jagels K."/>
            <person name="James K.D."/>
            <person name="Lennard N."/>
            <person name="Line A."/>
            <person name="Mayes R."/>
            <person name="Moule S."/>
            <person name="Mungall K."/>
            <person name="Ormond D."/>
            <person name="Quail M.A."/>
            <person name="Rabbinowitsch E."/>
            <person name="Rutherford K.M."/>
            <person name="Sanders M."/>
            <person name="Sharp S."/>
            <person name="Simmonds M."/>
            <person name="Stevens K."/>
            <person name="Whitehead S."/>
            <person name="Barrell B.G."/>
            <person name="Spratt B.G."/>
            <person name="Parkhill J."/>
        </authorList>
    </citation>
    <scope>NUCLEOTIDE SEQUENCE [LARGE SCALE GENOMIC DNA]</scope>
    <source>
        <strain>MRSA252</strain>
    </source>
</reference>
<proteinExistence type="inferred from homology"/>
<sequence length="347" mass="40045">MNHYIRTIGSMLILVYSMLAAFLFIDKVFVNIIYFQGMFYTQIFGIPVFLFLNLIIILLCIIVGSVLAYKINQQNDWIKTQIERSMEGETVGINDQNIEIYSETLDLYHTLVPLNQELHKLRLKTQNLTNENYNINDVKVKKIIEDERQRLARELHDSVSQQLFAASMMLSAIKETKLEPPLDQQIPILEKMVQDSQLEMRALLLHLRPLGLKDKSLGEGIKDLVIDLQKKVPMKVVHEIQDFKVPKGIEDHLFRITQEAISNTLRHSNGTKVTVELFNKDDYLLLRIQDNGKGFNVDEKLEQSYGLKNMRERALEIGATFHIVSLPDSGTRIEVKAPLNKEDSYDD</sequence>
<accession>Q6GFH2</accession>
<protein>
    <recommendedName>
        <fullName>Sensor protein VraS</fullName>
        <ecNumber evidence="1">2.7.13.3</ecNumber>
    </recommendedName>
</protein>
<comment type="function">
    <text evidence="2">Member of the two-component regulatory system PprA/PprB involved in biofilm formation by controlling the expression of many related genes including type IVb pili major subunit flp pilin, adhesin bapA or cupE fimbriae. Also modulates quorum-sensing signal production acting on both negative and positive modulators. Functions as a heme sensor histidine kinase which is autophosphorylated at a histidine residue and transfers its phosphate group to PprB.</text>
</comment>
<comment type="catalytic activity">
    <reaction evidence="1">
        <text>ATP + protein L-histidine = ADP + protein N-phospho-L-histidine.</text>
        <dbReference type="EC" id="2.7.13.3"/>
    </reaction>
</comment>
<comment type="subcellular location">
    <subcellularLocation>
        <location evidence="4">Cell membrane</location>
        <topology evidence="4">Multi-pass membrane protein</topology>
    </subcellularLocation>
</comment>
<comment type="PTM">
    <text evidence="1">Autophosphorylated on His-156.</text>
</comment>
<feature type="chain" id="PRO_0000074902" description="Sensor protein VraS">
    <location>
        <begin position="1"/>
        <end position="347"/>
    </location>
</feature>
<feature type="transmembrane region" description="Helical" evidence="3">
    <location>
        <begin position="13"/>
        <end position="33"/>
    </location>
</feature>
<feature type="transmembrane region" description="Helical" evidence="3">
    <location>
        <begin position="43"/>
        <end position="63"/>
    </location>
</feature>
<feature type="domain" description="Histidine kinase">
    <location>
        <begin position="150"/>
        <end position="341"/>
    </location>
</feature>
<feature type="modified residue" description="Phosphohistidine" evidence="1">
    <location>
        <position position="156"/>
    </location>
</feature>
<name>VRAS_STAAR</name>
<dbReference type="EC" id="2.7.13.3" evidence="1"/>
<dbReference type="EMBL" id="BX571856">
    <property type="protein sequence ID" value="CAG40962.1"/>
    <property type="molecule type" value="Genomic_DNA"/>
</dbReference>
<dbReference type="RefSeq" id="WP_001017131.1">
    <property type="nucleotide sequence ID" value="NC_002952.2"/>
</dbReference>
<dbReference type="SMR" id="Q6GFH2"/>
<dbReference type="KEGG" id="sar:SAR1975"/>
<dbReference type="HOGENOM" id="CLU_000445_20_12_9"/>
<dbReference type="Proteomes" id="UP000000596">
    <property type="component" value="Chromosome"/>
</dbReference>
<dbReference type="GO" id="GO:0005886">
    <property type="term" value="C:plasma membrane"/>
    <property type="evidence" value="ECO:0007669"/>
    <property type="project" value="UniProtKB-SubCell"/>
</dbReference>
<dbReference type="GO" id="GO:0005524">
    <property type="term" value="F:ATP binding"/>
    <property type="evidence" value="ECO:0007669"/>
    <property type="project" value="UniProtKB-KW"/>
</dbReference>
<dbReference type="GO" id="GO:0000155">
    <property type="term" value="F:phosphorelay sensor kinase activity"/>
    <property type="evidence" value="ECO:0007669"/>
    <property type="project" value="InterPro"/>
</dbReference>
<dbReference type="GO" id="GO:0046983">
    <property type="term" value="F:protein dimerization activity"/>
    <property type="evidence" value="ECO:0007669"/>
    <property type="project" value="InterPro"/>
</dbReference>
<dbReference type="CDD" id="cd16917">
    <property type="entry name" value="HATPase_UhpB-NarQ-NarX-like"/>
    <property type="match status" value="1"/>
</dbReference>
<dbReference type="Gene3D" id="1.20.5.1930">
    <property type="match status" value="1"/>
</dbReference>
<dbReference type="Gene3D" id="3.30.565.10">
    <property type="entry name" value="Histidine kinase-like ATPase, C-terminal domain"/>
    <property type="match status" value="1"/>
</dbReference>
<dbReference type="InterPro" id="IPR036890">
    <property type="entry name" value="HATPase_C_sf"/>
</dbReference>
<dbReference type="InterPro" id="IPR017202">
    <property type="entry name" value="LiaS/VraS"/>
</dbReference>
<dbReference type="InterPro" id="IPR050482">
    <property type="entry name" value="Sensor_HK_TwoCompSys"/>
</dbReference>
<dbReference type="InterPro" id="IPR011712">
    <property type="entry name" value="Sig_transdc_His_kin_sub3_dim/P"/>
</dbReference>
<dbReference type="PANTHER" id="PTHR24421">
    <property type="entry name" value="NITRATE/NITRITE SENSOR PROTEIN NARX-RELATED"/>
    <property type="match status" value="1"/>
</dbReference>
<dbReference type="PANTHER" id="PTHR24421:SF37">
    <property type="entry name" value="SENSOR HISTIDINE KINASE NARS"/>
    <property type="match status" value="1"/>
</dbReference>
<dbReference type="Pfam" id="PF02518">
    <property type="entry name" value="HATPase_c"/>
    <property type="match status" value="1"/>
</dbReference>
<dbReference type="Pfam" id="PF07730">
    <property type="entry name" value="HisKA_3"/>
    <property type="match status" value="1"/>
</dbReference>
<dbReference type="PIRSF" id="PIRSF037431">
    <property type="entry name" value="STHK_LiaS"/>
    <property type="match status" value="1"/>
</dbReference>
<dbReference type="SMART" id="SM00387">
    <property type="entry name" value="HATPase_c"/>
    <property type="match status" value="1"/>
</dbReference>
<dbReference type="SUPFAM" id="SSF55874">
    <property type="entry name" value="ATPase domain of HSP90 chaperone/DNA topoisomerase II/histidine kinase"/>
    <property type="match status" value="1"/>
</dbReference>